<keyword id="KW-0123">Cardiotoxin</keyword>
<keyword id="KW-0903">Direct protein sequencing</keyword>
<keyword id="KW-1015">Disulfide bond</keyword>
<keyword id="KW-0872">Ion channel impairing toxin</keyword>
<keyword id="KW-0166">Nematocyst</keyword>
<keyword id="KW-0528">Neurotoxin</keyword>
<keyword id="KW-0964">Secreted</keyword>
<keyword id="KW-0800">Toxin</keyword>
<keyword id="KW-0738">Voltage-gated sodium channel impairing toxin</keyword>
<evidence type="ECO:0000250" key="1"/>
<evidence type="ECO:0000269" key="2">
    <source>
    </source>
</evidence>
<evidence type="ECO:0000269" key="3">
    <source>
    </source>
</evidence>
<evidence type="ECO:0000269" key="4">
    <source>
    </source>
</evidence>
<evidence type="ECO:0000269" key="5">
    <source>
    </source>
</evidence>
<evidence type="ECO:0000303" key="6">
    <source>
    </source>
</evidence>
<evidence type="ECO:0000303" key="7">
    <source>
    </source>
</evidence>
<evidence type="ECO:0000303" key="8">
    <source>
    </source>
</evidence>
<evidence type="ECO:0000305" key="9"/>
<accession>P0C1F4</accession>
<sequence>GASCRCDSDGPTSRGNTLTGTLWLIGRCPSGWHNCRGSGPFIGYCCKQ</sequence>
<protein>
    <recommendedName>
        <fullName evidence="7">Delta-actitoxin-Bgr2a</fullName>
        <shortName evidence="7">Delta-AITX-Bgr2a</shortName>
    </recommendedName>
    <alternativeName>
        <fullName evidence="8">Bg II</fullName>
        <shortName evidence="6">BgII</shortName>
    </alternativeName>
    <alternativeName>
        <fullName>Neurotoxin Bg-2</fullName>
    </alternativeName>
</protein>
<proteinExistence type="evidence at protein level"/>
<comment type="function">
    <text evidence="2 3 4 5">Binds voltage-dependently at site 3 of sodium channels (Nav) and inhibits the inactivation of the activated channels, thereby blocking neuronal transmission. Possesses the highest efficacy for the insect sodium channel para/tipE (EC(50)=5.5 nM) (PubMed:12459477), and has effect on Nav1.2/SCN2A (in complex with SCN1B), Nav1.4/SCN4A (in complex with SCN1B) and Nav1.5/SCN5A (in complex with SCN1B) (PubMed:12459477). Also interacts with sodium channels in cardiac cells (PubMed:11704639). Shows lethality to crabs (PubMed:22015268).</text>
</comment>
<comment type="subcellular location">
    <subcellularLocation>
        <location evidence="9">Secreted</location>
    </subcellularLocation>
    <subcellularLocation>
        <location evidence="9">Nematocyst</location>
    </subcellularLocation>
</comment>
<comment type="mass spectrometry"/>
<comment type="mass spectrometry"/>
<comment type="toxic dose">
    <text evidence="5">LD(50) is 0.4 ug/kg by intracerebroventricular injection into mice.</text>
</comment>
<comment type="miscellaneous">
    <text>Negative results: has no effect on voltage-gated sodium channel Nav1.8/SCN10A (in complex with SCN1B).</text>
</comment>
<comment type="similarity">
    <text evidence="9">Belongs to the sea anemone sodium channel inhibitory toxin family. Type I subfamily.</text>
</comment>
<organism>
    <name type="scientific">Bunodosoma granuliferum</name>
    <name type="common">Red warty sea anemone</name>
    <dbReference type="NCBI Taxonomy" id="31164"/>
    <lineage>
        <taxon>Eukaryota</taxon>
        <taxon>Metazoa</taxon>
        <taxon>Cnidaria</taxon>
        <taxon>Anthozoa</taxon>
        <taxon>Hexacorallia</taxon>
        <taxon>Actiniaria</taxon>
        <taxon>Actiniidae</taxon>
        <taxon>Bunodosoma</taxon>
    </lineage>
</organism>
<reference key="1">
    <citation type="journal article" date="1994" name="J. Biol. Chem.">
        <title>Positively charged amino acid residues located similarly in sea anemone and scorpion toxins.</title>
        <authorList>
            <person name="Loret E.P."/>
            <person name="del Valle R.M."/>
            <person name="Mansuelle P."/>
            <person name="Sampieri F."/>
            <person name="Rochat H."/>
        </authorList>
    </citation>
    <scope>PROTEIN SEQUENCE</scope>
    <scope>FUNCTION</scope>
    <scope>TOXIC DOSE</scope>
</reference>
<reference key="2">
    <citation type="journal article" date="2001" name="Br. J. Pharmacol.">
        <title>Characterization of two Bunodosoma granulifera toxins active on cardiac sodium channels.</title>
        <authorList>
            <person name="Goudet C."/>
            <person name="Ferrer T."/>
            <person name="Galan L."/>
            <person name="Artiles A."/>
            <person name="Batista C.V.F."/>
            <person name="Possani L.D."/>
            <person name="Alvarez J."/>
            <person name="Aneiros A."/>
            <person name="Tytgat J."/>
        </authorList>
    </citation>
    <scope>PROTEIN SEQUENCE</scope>
    <scope>FUNCTION</scope>
    <scope>MASS SPECTROMETRY</scope>
</reference>
<reference key="3">
    <citation type="journal article" date="2002" name="FEBS Lett.">
        <title>The sea anemone Bunodosoma granulifera contains surprisingly efficacious and potent insect-selective toxins.</title>
        <authorList>
            <person name="Bosmans F."/>
            <person name="Aneiros A."/>
            <person name="Tytgat J."/>
        </authorList>
    </citation>
    <scope>FUNCTION</scope>
</reference>
<reference key="4">
    <citation type="journal article" date="2012" name="Peptides">
        <title>Peptide fingerprinting of the neurotoxic fractions isolated from the secretions of sea anemones Stichodactyla helianthus and Bunodosoma granulifera. New members of the APETx-like family identified by a 454 pyrosequencing approach.</title>
        <authorList>
            <person name="Rodriguez A.A."/>
            <person name="Cassoli J.S."/>
            <person name="Sa F."/>
            <person name="Dong Z.Q."/>
            <person name="de Freitas J.C."/>
            <person name="Pimenta A.M."/>
            <person name="de Lima M.E."/>
            <person name="Konno K."/>
            <person name="Lee S.M."/>
            <person name="Garateix A."/>
            <person name="Zaharenko A.J."/>
        </authorList>
    </citation>
    <scope>FUNCTION</scope>
    <scope>MASS SPECTROMETRY</scope>
</reference>
<reference key="5">
    <citation type="journal article" date="2012" name="Toxicon">
        <title>Development of a rational nomenclature for naming peptide and protein toxins from sea anemones.</title>
        <authorList>
            <person name="Oliveira J.S."/>
            <person name="Fuentes-Silva D."/>
            <person name="King G.F."/>
        </authorList>
    </citation>
    <scope>NOMENCLATURE</scope>
</reference>
<dbReference type="SMR" id="P0C1F4"/>
<dbReference type="GO" id="GO:0005576">
    <property type="term" value="C:extracellular region"/>
    <property type="evidence" value="ECO:0007669"/>
    <property type="project" value="UniProtKB-SubCell"/>
</dbReference>
<dbReference type="GO" id="GO:0042151">
    <property type="term" value="C:nematocyst"/>
    <property type="evidence" value="ECO:0007669"/>
    <property type="project" value="UniProtKB-SubCell"/>
</dbReference>
<dbReference type="GO" id="GO:0017080">
    <property type="term" value="F:sodium channel regulator activity"/>
    <property type="evidence" value="ECO:0007669"/>
    <property type="project" value="UniProtKB-KW"/>
</dbReference>
<dbReference type="GO" id="GO:0090729">
    <property type="term" value="F:toxin activity"/>
    <property type="evidence" value="ECO:0007669"/>
    <property type="project" value="UniProtKB-KW"/>
</dbReference>
<dbReference type="GO" id="GO:0009966">
    <property type="term" value="P:regulation of signal transduction"/>
    <property type="evidence" value="ECO:0007669"/>
    <property type="project" value="InterPro"/>
</dbReference>
<dbReference type="Gene3D" id="2.20.20.10">
    <property type="entry name" value="Anthopleurin-A"/>
    <property type="match status" value="1"/>
</dbReference>
<dbReference type="InterPro" id="IPR000693">
    <property type="entry name" value="Anenome_toxin"/>
</dbReference>
<dbReference type="InterPro" id="IPR023355">
    <property type="entry name" value="Myo_ane_neurotoxin_sf"/>
</dbReference>
<dbReference type="Pfam" id="PF00706">
    <property type="entry name" value="Toxin_4"/>
    <property type="match status" value="1"/>
</dbReference>
<dbReference type="PIRSF" id="PIRSF001905">
    <property type="entry name" value="Anenome_toxin"/>
    <property type="match status" value="1"/>
</dbReference>
<dbReference type="SUPFAM" id="SSF57392">
    <property type="entry name" value="Defensin-like"/>
    <property type="match status" value="1"/>
</dbReference>
<name>NA12_BUNGR</name>
<feature type="chain" id="PRO_0000236030" description="Delta-actitoxin-Bgr2a" evidence="2 5">
    <location>
        <begin position="1"/>
        <end position="48"/>
    </location>
</feature>
<feature type="site" description="Important for toxicity">
    <location>
        <position position="16"/>
    </location>
</feature>
<feature type="disulfide bond" evidence="1">
    <location>
        <begin position="4"/>
        <end position="45"/>
    </location>
</feature>
<feature type="disulfide bond" evidence="1">
    <location>
        <begin position="6"/>
        <end position="35"/>
    </location>
</feature>
<feature type="disulfide bond" evidence="1">
    <location>
        <begin position="28"/>
        <end position="46"/>
    </location>
</feature>